<reference key="1">
    <citation type="submission" date="2009-03" db="EMBL/GenBank/DDBJ databases">
        <title>Brucella melitensis ATCC 23457 whole genome shotgun sequencing project.</title>
        <authorList>
            <person name="Setubal J.C."/>
            <person name="Boyle S."/>
            <person name="Crasta O.R."/>
            <person name="Gillespie J.J."/>
            <person name="Kenyon R.W."/>
            <person name="Lu J."/>
            <person name="Mane S."/>
            <person name="Nagrani S."/>
            <person name="Shallom J.M."/>
            <person name="Shallom S."/>
            <person name="Shukla M."/>
            <person name="Snyder E.E."/>
            <person name="Sobral B.W."/>
            <person name="Wattam A.R."/>
            <person name="Will R."/>
            <person name="Williams K."/>
            <person name="Yoo H."/>
            <person name="Munk C."/>
            <person name="Tapia R."/>
            <person name="Han C."/>
            <person name="Detter J.C."/>
            <person name="Bruce D."/>
            <person name="Brettin T.S."/>
        </authorList>
    </citation>
    <scope>NUCLEOTIDE SEQUENCE [LARGE SCALE GENOMIC DNA]</scope>
    <source>
        <strain>ATCC 23457</strain>
    </source>
</reference>
<dbReference type="EC" id="6.3.4.4" evidence="1"/>
<dbReference type="EMBL" id="CP001488">
    <property type="protein sequence ID" value="ACO01419.1"/>
    <property type="molecule type" value="Genomic_DNA"/>
</dbReference>
<dbReference type="RefSeq" id="WP_002964773.1">
    <property type="nucleotide sequence ID" value="NC_012441.1"/>
</dbReference>
<dbReference type="SMR" id="C0REU7"/>
<dbReference type="KEGG" id="bmi:BMEA_A1736"/>
<dbReference type="HOGENOM" id="CLU_029848_0_0_5"/>
<dbReference type="UniPathway" id="UPA00075">
    <property type="reaction ID" value="UER00335"/>
</dbReference>
<dbReference type="Proteomes" id="UP000001748">
    <property type="component" value="Chromosome I"/>
</dbReference>
<dbReference type="GO" id="GO:0005737">
    <property type="term" value="C:cytoplasm"/>
    <property type="evidence" value="ECO:0007669"/>
    <property type="project" value="UniProtKB-SubCell"/>
</dbReference>
<dbReference type="GO" id="GO:0004019">
    <property type="term" value="F:adenylosuccinate synthase activity"/>
    <property type="evidence" value="ECO:0007669"/>
    <property type="project" value="UniProtKB-UniRule"/>
</dbReference>
<dbReference type="GO" id="GO:0005525">
    <property type="term" value="F:GTP binding"/>
    <property type="evidence" value="ECO:0007669"/>
    <property type="project" value="UniProtKB-UniRule"/>
</dbReference>
<dbReference type="GO" id="GO:0000287">
    <property type="term" value="F:magnesium ion binding"/>
    <property type="evidence" value="ECO:0007669"/>
    <property type="project" value="UniProtKB-UniRule"/>
</dbReference>
<dbReference type="GO" id="GO:0044208">
    <property type="term" value="P:'de novo' AMP biosynthetic process"/>
    <property type="evidence" value="ECO:0007669"/>
    <property type="project" value="UniProtKB-UniRule"/>
</dbReference>
<dbReference type="GO" id="GO:0046040">
    <property type="term" value="P:IMP metabolic process"/>
    <property type="evidence" value="ECO:0007669"/>
    <property type="project" value="TreeGrafter"/>
</dbReference>
<dbReference type="CDD" id="cd03108">
    <property type="entry name" value="AdSS"/>
    <property type="match status" value="1"/>
</dbReference>
<dbReference type="FunFam" id="1.10.300.10:FF:000001">
    <property type="entry name" value="Adenylosuccinate synthetase"/>
    <property type="match status" value="1"/>
</dbReference>
<dbReference type="FunFam" id="3.90.170.10:FF:000001">
    <property type="entry name" value="Adenylosuccinate synthetase"/>
    <property type="match status" value="1"/>
</dbReference>
<dbReference type="Gene3D" id="3.40.440.10">
    <property type="entry name" value="Adenylosuccinate Synthetase, subunit A, domain 1"/>
    <property type="match status" value="1"/>
</dbReference>
<dbReference type="Gene3D" id="1.10.300.10">
    <property type="entry name" value="Adenylosuccinate Synthetase, subunit A, domain 2"/>
    <property type="match status" value="1"/>
</dbReference>
<dbReference type="Gene3D" id="3.90.170.10">
    <property type="entry name" value="Adenylosuccinate Synthetase, subunit A, domain 3"/>
    <property type="match status" value="1"/>
</dbReference>
<dbReference type="HAMAP" id="MF_00011">
    <property type="entry name" value="Adenylosucc_synth"/>
    <property type="match status" value="1"/>
</dbReference>
<dbReference type="InterPro" id="IPR018220">
    <property type="entry name" value="Adenylosuccin_syn_GTP-bd"/>
</dbReference>
<dbReference type="InterPro" id="IPR033128">
    <property type="entry name" value="Adenylosuccin_syn_Lys_AS"/>
</dbReference>
<dbReference type="InterPro" id="IPR042109">
    <property type="entry name" value="Adenylosuccinate_synth_dom1"/>
</dbReference>
<dbReference type="InterPro" id="IPR042110">
    <property type="entry name" value="Adenylosuccinate_synth_dom2"/>
</dbReference>
<dbReference type="InterPro" id="IPR042111">
    <property type="entry name" value="Adenylosuccinate_synth_dom3"/>
</dbReference>
<dbReference type="InterPro" id="IPR001114">
    <property type="entry name" value="Adenylosuccinate_synthetase"/>
</dbReference>
<dbReference type="InterPro" id="IPR027417">
    <property type="entry name" value="P-loop_NTPase"/>
</dbReference>
<dbReference type="NCBIfam" id="NF002223">
    <property type="entry name" value="PRK01117.1"/>
    <property type="match status" value="1"/>
</dbReference>
<dbReference type="NCBIfam" id="TIGR00184">
    <property type="entry name" value="purA"/>
    <property type="match status" value="1"/>
</dbReference>
<dbReference type="PANTHER" id="PTHR11846">
    <property type="entry name" value="ADENYLOSUCCINATE SYNTHETASE"/>
    <property type="match status" value="1"/>
</dbReference>
<dbReference type="PANTHER" id="PTHR11846:SF0">
    <property type="entry name" value="ADENYLOSUCCINATE SYNTHETASE"/>
    <property type="match status" value="1"/>
</dbReference>
<dbReference type="Pfam" id="PF00709">
    <property type="entry name" value="Adenylsucc_synt"/>
    <property type="match status" value="1"/>
</dbReference>
<dbReference type="SMART" id="SM00788">
    <property type="entry name" value="Adenylsucc_synt"/>
    <property type="match status" value="1"/>
</dbReference>
<dbReference type="SUPFAM" id="SSF52540">
    <property type="entry name" value="P-loop containing nucleoside triphosphate hydrolases"/>
    <property type="match status" value="1"/>
</dbReference>
<dbReference type="PROSITE" id="PS01266">
    <property type="entry name" value="ADENYLOSUCCIN_SYN_1"/>
    <property type="match status" value="1"/>
</dbReference>
<dbReference type="PROSITE" id="PS00513">
    <property type="entry name" value="ADENYLOSUCCIN_SYN_2"/>
    <property type="match status" value="1"/>
</dbReference>
<proteinExistence type="inferred from homology"/>
<feature type="chain" id="PRO_1000116457" description="Adenylosuccinate synthetase">
    <location>
        <begin position="1"/>
        <end position="429"/>
    </location>
</feature>
<feature type="active site" description="Proton acceptor" evidence="1">
    <location>
        <position position="13"/>
    </location>
</feature>
<feature type="active site" description="Proton donor" evidence="1">
    <location>
        <position position="41"/>
    </location>
</feature>
<feature type="binding site" evidence="1">
    <location>
        <begin position="12"/>
        <end position="18"/>
    </location>
    <ligand>
        <name>GTP</name>
        <dbReference type="ChEBI" id="CHEBI:37565"/>
    </ligand>
</feature>
<feature type="binding site" description="in other chain" evidence="1">
    <location>
        <begin position="13"/>
        <end position="16"/>
    </location>
    <ligand>
        <name>IMP</name>
        <dbReference type="ChEBI" id="CHEBI:58053"/>
        <note>ligand shared between dimeric partners</note>
    </ligand>
</feature>
<feature type="binding site" evidence="1">
    <location>
        <position position="13"/>
    </location>
    <ligand>
        <name>Mg(2+)</name>
        <dbReference type="ChEBI" id="CHEBI:18420"/>
    </ligand>
</feature>
<feature type="binding site" description="in other chain" evidence="1">
    <location>
        <begin position="38"/>
        <end position="41"/>
    </location>
    <ligand>
        <name>IMP</name>
        <dbReference type="ChEBI" id="CHEBI:58053"/>
        <note>ligand shared between dimeric partners</note>
    </ligand>
</feature>
<feature type="binding site" evidence="1">
    <location>
        <begin position="40"/>
        <end position="42"/>
    </location>
    <ligand>
        <name>GTP</name>
        <dbReference type="ChEBI" id="CHEBI:37565"/>
    </ligand>
</feature>
<feature type="binding site" evidence="1">
    <location>
        <position position="40"/>
    </location>
    <ligand>
        <name>Mg(2+)</name>
        <dbReference type="ChEBI" id="CHEBI:18420"/>
    </ligand>
</feature>
<feature type="binding site" description="in other chain" evidence="1">
    <location>
        <position position="129"/>
    </location>
    <ligand>
        <name>IMP</name>
        <dbReference type="ChEBI" id="CHEBI:58053"/>
        <note>ligand shared between dimeric partners</note>
    </ligand>
</feature>
<feature type="binding site" evidence="1">
    <location>
        <position position="143"/>
    </location>
    <ligand>
        <name>IMP</name>
        <dbReference type="ChEBI" id="CHEBI:58053"/>
        <note>ligand shared between dimeric partners</note>
    </ligand>
</feature>
<feature type="binding site" description="in other chain" evidence="1">
    <location>
        <position position="223"/>
    </location>
    <ligand>
        <name>IMP</name>
        <dbReference type="ChEBI" id="CHEBI:58053"/>
        <note>ligand shared between dimeric partners</note>
    </ligand>
</feature>
<feature type="binding site" description="in other chain" evidence="1">
    <location>
        <position position="238"/>
    </location>
    <ligand>
        <name>IMP</name>
        <dbReference type="ChEBI" id="CHEBI:58053"/>
        <note>ligand shared between dimeric partners</note>
    </ligand>
</feature>
<feature type="binding site" evidence="1">
    <location>
        <begin position="298"/>
        <end position="304"/>
    </location>
    <ligand>
        <name>substrate</name>
    </ligand>
</feature>
<feature type="binding site" description="in other chain" evidence="1">
    <location>
        <position position="302"/>
    </location>
    <ligand>
        <name>IMP</name>
        <dbReference type="ChEBI" id="CHEBI:58053"/>
        <note>ligand shared between dimeric partners</note>
    </ligand>
</feature>
<feature type="binding site" evidence="1">
    <location>
        <position position="304"/>
    </location>
    <ligand>
        <name>GTP</name>
        <dbReference type="ChEBI" id="CHEBI:37565"/>
    </ligand>
</feature>
<feature type="binding site" evidence="1">
    <location>
        <begin position="330"/>
        <end position="332"/>
    </location>
    <ligand>
        <name>GTP</name>
        <dbReference type="ChEBI" id="CHEBI:37565"/>
    </ligand>
</feature>
<feature type="binding site" evidence="1">
    <location>
        <begin position="412"/>
        <end position="414"/>
    </location>
    <ligand>
        <name>GTP</name>
        <dbReference type="ChEBI" id="CHEBI:37565"/>
    </ligand>
</feature>
<accession>C0REU7</accession>
<gene>
    <name evidence="1" type="primary">purA</name>
    <name type="ordered locus">BMEA_A1736</name>
</gene>
<comment type="function">
    <text evidence="1">Plays an important role in the de novo pathway of purine nucleotide biosynthesis. Catalyzes the first committed step in the biosynthesis of AMP from IMP.</text>
</comment>
<comment type="catalytic activity">
    <reaction evidence="1">
        <text>IMP + L-aspartate + GTP = N(6)-(1,2-dicarboxyethyl)-AMP + GDP + phosphate + 2 H(+)</text>
        <dbReference type="Rhea" id="RHEA:15753"/>
        <dbReference type="ChEBI" id="CHEBI:15378"/>
        <dbReference type="ChEBI" id="CHEBI:29991"/>
        <dbReference type="ChEBI" id="CHEBI:37565"/>
        <dbReference type="ChEBI" id="CHEBI:43474"/>
        <dbReference type="ChEBI" id="CHEBI:57567"/>
        <dbReference type="ChEBI" id="CHEBI:58053"/>
        <dbReference type="ChEBI" id="CHEBI:58189"/>
        <dbReference type="EC" id="6.3.4.4"/>
    </reaction>
</comment>
<comment type="cofactor">
    <cofactor evidence="1">
        <name>Mg(2+)</name>
        <dbReference type="ChEBI" id="CHEBI:18420"/>
    </cofactor>
    <text evidence="1">Binds 1 Mg(2+) ion per subunit.</text>
</comment>
<comment type="pathway">
    <text evidence="1">Purine metabolism; AMP biosynthesis via de novo pathway; AMP from IMP: step 1/2.</text>
</comment>
<comment type="subunit">
    <text evidence="1">Homodimer.</text>
</comment>
<comment type="subcellular location">
    <subcellularLocation>
        <location evidence="1">Cytoplasm</location>
    </subcellularLocation>
</comment>
<comment type="similarity">
    <text evidence="1">Belongs to the adenylosuccinate synthetase family.</text>
</comment>
<organism>
    <name type="scientific">Brucella melitensis biotype 2 (strain ATCC 23457)</name>
    <dbReference type="NCBI Taxonomy" id="546272"/>
    <lineage>
        <taxon>Bacteria</taxon>
        <taxon>Pseudomonadati</taxon>
        <taxon>Pseudomonadota</taxon>
        <taxon>Alphaproteobacteria</taxon>
        <taxon>Hyphomicrobiales</taxon>
        <taxon>Brucellaceae</taxon>
        <taxon>Brucella/Ochrobactrum group</taxon>
        <taxon>Brucella</taxon>
    </lineage>
</organism>
<name>PURA_BRUMB</name>
<sequence length="429" mass="46561">MANVVVVGSQWGDEGKGKIVDWLSERADVIVRYQGGHNAGHTLVIDGVSYKLSLLPSGLVRGKLSVIGNGVVVDPHHFVAEVEKLRGQGIDVTPDVLRVAENAPLILSIHRELDAMREGSNSGLKIGTTKRGIGPAYEDKVGRRAIRVIDLTEPETLRPKVERLLAHHNSLRRGMGLEEIAVETILTELTSVADQILPYIDQVWRVLDERRKAGARILFEGAQGALLDNDHGTYPFVTSSNTVAGQAAAGSGLGPTAIGYVLGITKAYTTRVGEGPFPTELNDEIGEFLGTKGHEFGVVTGRKRRCGWFDAVIVRQTVRTSGINGIALTKLDVLDGLEEIKICVAYELDGKRIDYLPSSMGAQARVKPIYETLPGWSETTAGARSWNDLPAQAVKYVRHIEELIGAPVAMLSTSPEREDTILVTDPFHD</sequence>
<protein>
    <recommendedName>
        <fullName evidence="1">Adenylosuccinate synthetase</fullName>
        <shortName evidence="1">AMPSase</shortName>
        <shortName evidence="1">AdSS</shortName>
        <ecNumber evidence="1">6.3.4.4</ecNumber>
    </recommendedName>
    <alternativeName>
        <fullName evidence="1">IMP--aspartate ligase</fullName>
    </alternativeName>
</protein>
<keyword id="KW-0963">Cytoplasm</keyword>
<keyword id="KW-0342">GTP-binding</keyword>
<keyword id="KW-0436">Ligase</keyword>
<keyword id="KW-0460">Magnesium</keyword>
<keyword id="KW-0479">Metal-binding</keyword>
<keyword id="KW-0547">Nucleotide-binding</keyword>
<keyword id="KW-0658">Purine biosynthesis</keyword>
<evidence type="ECO:0000255" key="1">
    <source>
        <dbReference type="HAMAP-Rule" id="MF_00011"/>
    </source>
</evidence>